<name>OMP10_RHILO</name>
<proteinExistence type="inferred from homology"/>
<gene>
    <name type="primary">omp10</name>
    <name type="ordered locus">mlr3016</name>
</gene>
<sequence>MTIARKVLSIGMAGSFAMMLAACTTSGPDAPPMAAAPKGVEGSWIDAKGTGLSTFTAGKFATVATDTGQKLADGSYTMTGATSVEINGTSLIRQTPVSFNCLLISTSQLNCTSSSGQNFVLTRRT</sequence>
<keyword id="KW-0998">Cell outer membrane</keyword>
<keyword id="KW-0449">Lipoprotein</keyword>
<keyword id="KW-0472">Membrane</keyword>
<keyword id="KW-0564">Palmitate</keyword>
<keyword id="KW-0732">Signal</keyword>
<feature type="signal peptide" evidence="2">
    <location>
        <begin position="1"/>
        <end position="22"/>
    </location>
</feature>
<feature type="chain" id="PRO_0000018241" description="Outer membrane lipoprotein omp10 homolog">
    <location>
        <begin position="23"/>
        <end position="125"/>
    </location>
</feature>
<feature type="lipid moiety-binding region" description="N-palmitoyl cysteine" evidence="2">
    <location>
        <position position="23"/>
    </location>
</feature>
<feature type="lipid moiety-binding region" description="S-diacylglycerol cysteine" evidence="2">
    <location>
        <position position="23"/>
    </location>
</feature>
<organism>
    <name type="scientific">Mesorhizobium japonicum (strain LMG 29417 / CECT 9101 / MAFF 303099)</name>
    <name type="common">Mesorhizobium loti (strain MAFF 303099)</name>
    <dbReference type="NCBI Taxonomy" id="266835"/>
    <lineage>
        <taxon>Bacteria</taxon>
        <taxon>Pseudomonadati</taxon>
        <taxon>Pseudomonadota</taxon>
        <taxon>Alphaproteobacteria</taxon>
        <taxon>Hyphomicrobiales</taxon>
        <taxon>Phyllobacteriaceae</taxon>
        <taxon>Mesorhizobium</taxon>
    </lineage>
</organism>
<reference key="1">
    <citation type="journal article" date="2000" name="DNA Res.">
        <title>Complete genome structure of the nitrogen-fixing symbiotic bacterium Mesorhizobium loti.</title>
        <authorList>
            <person name="Kaneko T."/>
            <person name="Nakamura Y."/>
            <person name="Sato S."/>
            <person name="Asamizu E."/>
            <person name="Kato T."/>
            <person name="Sasamoto S."/>
            <person name="Watanabe A."/>
            <person name="Idesawa K."/>
            <person name="Ishikawa A."/>
            <person name="Kawashima K."/>
            <person name="Kimura T."/>
            <person name="Kishida Y."/>
            <person name="Kiyokawa C."/>
            <person name="Kohara M."/>
            <person name="Matsumoto M."/>
            <person name="Matsuno A."/>
            <person name="Mochizuki Y."/>
            <person name="Nakayama S."/>
            <person name="Nakazaki N."/>
            <person name="Shimpo S."/>
            <person name="Sugimoto M."/>
            <person name="Takeuchi C."/>
            <person name="Yamada M."/>
            <person name="Tabata S."/>
        </authorList>
    </citation>
    <scope>NUCLEOTIDE SEQUENCE [LARGE SCALE GENOMIC DNA]</scope>
    <source>
        <strain>LMG 29417 / CECT 9101 / MAFF 303099</strain>
    </source>
</reference>
<dbReference type="EMBL" id="BA000012">
    <property type="protein sequence ID" value="BAB50003.1"/>
    <property type="status" value="ALT_INIT"/>
    <property type="molecule type" value="Genomic_DNA"/>
</dbReference>
<dbReference type="RefSeq" id="WP_032931565.1">
    <property type="nucleotide sequence ID" value="NC_002678.2"/>
</dbReference>
<dbReference type="KEGG" id="mlo:mlr3016"/>
<dbReference type="eggNOG" id="ENOG5033H6E">
    <property type="taxonomic scope" value="Bacteria"/>
</dbReference>
<dbReference type="HOGENOM" id="CLU_136213_0_0_5"/>
<dbReference type="Proteomes" id="UP000000552">
    <property type="component" value="Chromosome"/>
</dbReference>
<dbReference type="GO" id="GO:0009279">
    <property type="term" value="C:cell outer membrane"/>
    <property type="evidence" value="ECO:0007669"/>
    <property type="project" value="UniProtKB-SubCell"/>
</dbReference>
<dbReference type="PROSITE" id="PS51257">
    <property type="entry name" value="PROKAR_LIPOPROTEIN"/>
    <property type="match status" value="1"/>
</dbReference>
<comment type="subcellular location">
    <subcellularLocation>
        <location evidence="1">Cell outer membrane</location>
        <topology evidence="2">Lipid-anchor</topology>
    </subcellularLocation>
</comment>
<comment type="similarity">
    <text evidence="3">Belongs to the rhizobiaceae omp10 lipoprotein family.</text>
</comment>
<comment type="sequence caution" evidence="3">
    <conflict type="erroneous initiation">
        <sequence resource="EMBL-CDS" id="BAB50003"/>
    </conflict>
</comment>
<protein>
    <recommendedName>
        <fullName>Outer membrane lipoprotein omp10 homolog</fullName>
    </recommendedName>
</protein>
<evidence type="ECO:0000250" key="1"/>
<evidence type="ECO:0000255" key="2">
    <source>
        <dbReference type="PROSITE-ProRule" id="PRU00303"/>
    </source>
</evidence>
<evidence type="ECO:0000305" key="3"/>
<accession>Q98H63</accession>